<evidence type="ECO:0000255" key="1">
    <source>
        <dbReference type="HAMAP-Rule" id="MF_00259"/>
    </source>
</evidence>
<organism>
    <name type="scientific">Listeria monocytogenes serotype 4a (strain HCC23)</name>
    <dbReference type="NCBI Taxonomy" id="552536"/>
    <lineage>
        <taxon>Bacteria</taxon>
        <taxon>Bacillati</taxon>
        <taxon>Bacillota</taxon>
        <taxon>Bacilli</taxon>
        <taxon>Bacillales</taxon>
        <taxon>Listeriaceae</taxon>
        <taxon>Listeria</taxon>
    </lineage>
</organism>
<name>GCST_LISMH</name>
<proteinExistence type="inferred from homology"/>
<dbReference type="EC" id="2.1.2.10" evidence="1"/>
<dbReference type="EMBL" id="CP001175">
    <property type="protein sequence ID" value="ACK39570.1"/>
    <property type="molecule type" value="Genomic_DNA"/>
</dbReference>
<dbReference type="RefSeq" id="WP_012581371.1">
    <property type="nucleotide sequence ID" value="NC_011660.1"/>
</dbReference>
<dbReference type="SMR" id="B8DFY0"/>
<dbReference type="KEGG" id="lmh:LMHCC_1223"/>
<dbReference type="HOGENOM" id="CLU_007884_10_2_9"/>
<dbReference type="GO" id="GO:0005829">
    <property type="term" value="C:cytosol"/>
    <property type="evidence" value="ECO:0007669"/>
    <property type="project" value="TreeGrafter"/>
</dbReference>
<dbReference type="GO" id="GO:0005960">
    <property type="term" value="C:glycine cleavage complex"/>
    <property type="evidence" value="ECO:0007669"/>
    <property type="project" value="InterPro"/>
</dbReference>
<dbReference type="GO" id="GO:0004047">
    <property type="term" value="F:aminomethyltransferase activity"/>
    <property type="evidence" value="ECO:0007669"/>
    <property type="project" value="UniProtKB-UniRule"/>
</dbReference>
<dbReference type="GO" id="GO:0008483">
    <property type="term" value="F:transaminase activity"/>
    <property type="evidence" value="ECO:0007669"/>
    <property type="project" value="UniProtKB-KW"/>
</dbReference>
<dbReference type="GO" id="GO:0019464">
    <property type="term" value="P:glycine decarboxylation via glycine cleavage system"/>
    <property type="evidence" value="ECO:0007669"/>
    <property type="project" value="UniProtKB-UniRule"/>
</dbReference>
<dbReference type="FunFam" id="2.40.30.110:FF:000003">
    <property type="entry name" value="Aminomethyltransferase"/>
    <property type="match status" value="1"/>
</dbReference>
<dbReference type="FunFam" id="3.30.70.1400:FF:000001">
    <property type="entry name" value="Aminomethyltransferase"/>
    <property type="match status" value="1"/>
</dbReference>
<dbReference type="FunFam" id="4.10.1250.10:FF:000001">
    <property type="entry name" value="Aminomethyltransferase"/>
    <property type="match status" value="1"/>
</dbReference>
<dbReference type="Gene3D" id="2.40.30.110">
    <property type="entry name" value="Aminomethyltransferase beta-barrel domains"/>
    <property type="match status" value="1"/>
</dbReference>
<dbReference type="Gene3D" id="3.30.70.1400">
    <property type="entry name" value="Aminomethyltransferase beta-barrel domains"/>
    <property type="match status" value="1"/>
</dbReference>
<dbReference type="Gene3D" id="4.10.1250.10">
    <property type="entry name" value="Aminomethyltransferase fragment"/>
    <property type="match status" value="1"/>
</dbReference>
<dbReference type="Gene3D" id="3.30.1360.120">
    <property type="entry name" value="Probable tRNA modification gtpase trme, domain 1"/>
    <property type="match status" value="1"/>
</dbReference>
<dbReference type="HAMAP" id="MF_00259">
    <property type="entry name" value="GcvT"/>
    <property type="match status" value="1"/>
</dbReference>
<dbReference type="InterPro" id="IPR006223">
    <property type="entry name" value="GCS_T"/>
</dbReference>
<dbReference type="InterPro" id="IPR022903">
    <property type="entry name" value="GCS_T_bac"/>
</dbReference>
<dbReference type="InterPro" id="IPR013977">
    <property type="entry name" value="GCST_C"/>
</dbReference>
<dbReference type="InterPro" id="IPR006222">
    <property type="entry name" value="GCV_T_N"/>
</dbReference>
<dbReference type="InterPro" id="IPR028896">
    <property type="entry name" value="GcvT/YgfZ/DmdA"/>
</dbReference>
<dbReference type="InterPro" id="IPR029043">
    <property type="entry name" value="GcvT/YgfZ_C"/>
</dbReference>
<dbReference type="InterPro" id="IPR027266">
    <property type="entry name" value="TrmE/GcvT_dom1"/>
</dbReference>
<dbReference type="NCBIfam" id="TIGR00528">
    <property type="entry name" value="gcvT"/>
    <property type="match status" value="1"/>
</dbReference>
<dbReference type="NCBIfam" id="NF001567">
    <property type="entry name" value="PRK00389.1"/>
    <property type="match status" value="1"/>
</dbReference>
<dbReference type="PANTHER" id="PTHR43757">
    <property type="entry name" value="AMINOMETHYLTRANSFERASE"/>
    <property type="match status" value="1"/>
</dbReference>
<dbReference type="PANTHER" id="PTHR43757:SF2">
    <property type="entry name" value="AMINOMETHYLTRANSFERASE, MITOCHONDRIAL"/>
    <property type="match status" value="1"/>
</dbReference>
<dbReference type="Pfam" id="PF01571">
    <property type="entry name" value="GCV_T"/>
    <property type="match status" value="1"/>
</dbReference>
<dbReference type="Pfam" id="PF08669">
    <property type="entry name" value="GCV_T_C"/>
    <property type="match status" value="1"/>
</dbReference>
<dbReference type="PIRSF" id="PIRSF006487">
    <property type="entry name" value="GcvT"/>
    <property type="match status" value="1"/>
</dbReference>
<dbReference type="SUPFAM" id="SSF101790">
    <property type="entry name" value="Aminomethyltransferase beta-barrel domain"/>
    <property type="match status" value="1"/>
</dbReference>
<dbReference type="SUPFAM" id="SSF103025">
    <property type="entry name" value="Folate-binding domain"/>
    <property type="match status" value="1"/>
</dbReference>
<feature type="chain" id="PRO_1000125641" description="Aminomethyltransferase">
    <location>
        <begin position="1"/>
        <end position="362"/>
    </location>
</feature>
<accession>B8DFY0</accession>
<reference key="1">
    <citation type="journal article" date="2011" name="J. Bacteriol.">
        <title>Genome sequence of lineage III Listeria monocytogenes strain HCC23.</title>
        <authorList>
            <person name="Steele C.L."/>
            <person name="Donaldson J.R."/>
            <person name="Paul D."/>
            <person name="Banes M.M."/>
            <person name="Arick T."/>
            <person name="Bridges S.M."/>
            <person name="Lawrence M.L."/>
        </authorList>
    </citation>
    <scope>NUCLEOTIDE SEQUENCE [LARGE SCALE GENOMIC DNA]</scope>
    <source>
        <strain>HCC23</strain>
    </source>
</reference>
<sequence length="362" mass="39465">MTELLKTPIHPLYAKYGAKTIDFGGWDLPVQFAGIKAEHEAVRTDAGLFDVSHMGEILVEGPDSTSYLQYLLTNDIEKIKIGKAQYNIMCYETGGTVDDLVVYKKSETEYILVVNAANTAKDFEWMVKNIQGDVSVTNVSSEYGQLALQGPNAEKILAKLTDVDLSSISFFGFVEDADVAGVKTIISRSGYTGEDGFEIYMPSADAGKVFEAILAEGVAPIGLGARDTLRLEAVLALYGQELSKDITPLEAGLNFAVKLKKEADFIGKEALIKQKEAGLNRKLVGIELIERGIPRHDYPVFLNDEEIGIVTSGTQSPTLGTNIGLALIDTAYTELGQEVEVGIRNKKIKAKIVPTPFYKRAK</sequence>
<comment type="function">
    <text evidence="1">The glycine cleavage system catalyzes the degradation of glycine.</text>
</comment>
<comment type="catalytic activity">
    <reaction evidence="1">
        <text>N(6)-[(R)-S(8)-aminomethyldihydrolipoyl]-L-lysyl-[protein] + (6S)-5,6,7,8-tetrahydrofolate = N(6)-[(R)-dihydrolipoyl]-L-lysyl-[protein] + (6R)-5,10-methylene-5,6,7,8-tetrahydrofolate + NH4(+)</text>
        <dbReference type="Rhea" id="RHEA:16945"/>
        <dbReference type="Rhea" id="RHEA-COMP:10475"/>
        <dbReference type="Rhea" id="RHEA-COMP:10492"/>
        <dbReference type="ChEBI" id="CHEBI:15636"/>
        <dbReference type="ChEBI" id="CHEBI:28938"/>
        <dbReference type="ChEBI" id="CHEBI:57453"/>
        <dbReference type="ChEBI" id="CHEBI:83100"/>
        <dbReference type="ChEBI" id="CHEBI:83143"/>
        <dbReference type="EC" id="2.1.2.10"/>
    </reaction>
</comment>
<comment type="subunit">
    <text evidence="1">The glycine cleavage system is composed of four proteins: P, T, L and H.</text>
</comment>
<comment type="similarity">
    <text evidence="1">Belongs to the GcvT family.</text>
</comment>
<gene>
    <name evidence="1" type="primary">gcvT</name>
    <name type="ordered locus">LMHCC_1223</name>
</gene>
<protein>
    <recommendedName>
        <fullName evidence="1">Aminomethyltransferase</fullName>
        <ecNumber evidence="1">2.1.2.10</ecNumber>
    </recommendedName>
    <alternativeName>
        <fullName evidence="1">Glycine cleavage system T protein</fullName>
    </alternativeName>
</protein>
<keyword id="KW-0032">Aminotransferase</keyword>
<keyword id="KW-0808">Transferase</keyword>